<dbReference type="EMBL" id="M24504">
    <property type="protein sequence ID" value="AAA20873.1"/>
    <property type="molecule type" value="mRNA"/>
</dbReference>
<dbReference type="EMBL" id="AL662990">
    <property type="protein sequence ID" value="CAE02230.2"/>
    <property type="status" value="ALT_INIT"/>
    <property type="molecule type" value="Genomic_DNA"/>
</dbReference>
<dbReference type="EMBL" id="AP008210">
    <property type="protein sequence ID" value="BAF14066.1"/>
    <property type="molecule type" value="Genomic_DNA"/>
</dbReference>
<dbReference type="EMBL" id="AP014960">
    <property type="protein sequence ID" value="BAS87921.1"/>
    <property type="molecule type" value="Genomic_DNA"/>
</dbReference>
<dbReference type="EMBL" id="AK103206">
    <property type="protein sequence ID" value="BAG95953.1"/>
    <property type="molecule type" value="mRNA"/>
</dbReference>
<dbReference type="EMBL" id="AF140679">
    <property type="protein sequence ID" value="AAD27887.1"/>
    <property type="molecule type" value="Genomic_DNA"/>
</dbReference>
<dbReference type="EMBL" id="AF140682">
    <property type="protein sequence ID" value="AAD27890.1"/>
    <property type="molecule type" value="Genomic_DNA"/>
</dbReference>
<dbReference type="PIR" id="A23616">
    <property type="entry name" value="A23616"/>
</dbReference>
<dbReference type="PIR" id="JQ1102">
    <property type="entry name" value="LNRZ"/>
</dbReference>
<dbReference type="RefSeq" id="XP_015633956.1">
    <property type="nucleotide sequence ID" value="XM_015778470.1"/>
</dbReference>
<dbReference type="SMR" id="Q0JF21"/>
<dbReference type="STRING" id="39947.Q0JF21"/>
<dbReference type="PaxDb" id="39947-Q0JF21"/>
<dbReference type="EnsemblPlants" id="Os04t0173800-01">
    <property type="protein sequence ID" value="Os04t0173800-01"/>
    <property type="gene ID" value="Os04g0173800"/>
</dbReference>
<dbReference type="Gramene" id="Os04t0173800-01">
    <property type="protein sequence ID" value="Os04t0173800-01"/>
    <property type="gene ID" value="Os04g0173800"/>
</dbReference>
<dbReference type="KEGG" id="dosa:Os04g0173800"/>
<dbReference type="eggNOG" id="ENOG502S7G0">
    <property type="taxonomic scope" value="Eukaryota"/>
</dbReference>
<dbReference type="HOGENOM" id="CLU_112193_0_0_1"/>
<dbReference type="InParanoid" id="Q0JF21"/>
<dbReference type="OMA" id="CGAANWC"/>
<dbReference type="OrthoDB" id="617225at2759"/>
<dbReference type="Proteomes" id="UP000000763">
    <property type="component" value="Chromosome 4"/>
</dbReference>
<dbReference type="Proteomes" id="UP000059680">
    <property type="component" value="Chromosome 4"/>
</dbReference>
<dbReference type="ExpressionAtlas" id="Q0JF21">
    <property type="expression patterns" value="baseline and differential"/>
</dbReference>
<dbReference type="GO" id="GO:0030246">
    <property type="term" value="F:carbohydrate binding"/>
    <property type="evidence" value="ECO:0007669"/>
    <property type="project" value="UniProtKB-KW"/>
</dbReference>
<dbReference type="GO" id="GO:0008061">
    <property type="term" value="F:chitin binding"/>
    <property type="evidence" value="ECO:0007669"/>
    <property type="project" value="UniProtKB-KW"/>
</dbReference>
<dbReference type="CDD" id="cd00035">
    <property type="entry name" value="ChtBD1"/>
    <property type="match status" value="4"/>
</dbReference>
<dbReference type="FunFam" id="3.30.60.10:FF:000006">
    <property type="entry name" value="Agglutinin isolectin 1"/>
    <property type="match status" value="2"/>
</dbReference>
<dbReference type="Gene3D" id="3.30.60.10">
    <property type="entry name" value="Endochitinase-like"/>
    <property type="match status" value="4"/>
</dbReference>
<dbReference type="InterPro" id="IPR001002">
    <property type="entry name" value="Chitin-bd_1"/>
</dbReference>
<dbReference type="InterPro" id="IPR018371">
    <property type="entry name" value="Chitin-binding_1_CS"/>
</dbReference>
<dbReference type="InterPro" id="IPR036861">
    <property type="entry name" value="Endochitinase-like_sf"/>
</dbReference>
<dbReference type="PANTHER" id="PTHR47849">
    <property type="entry name" value="CHITIN-BINDING LECTIN 1"/>
    <property type="match status" value="1"/>
</dbReference>
<dbReference type="PANTHER" id="PTHR47849:SF8">
    <property type="entry name" value="LECTIN"/>
    <property type="match status" value="1"/>
</dbReference>
<dbReference type="Pfam" id="PF00187">
    <property type="entry name" value="Chitin_bind_1"/>
    <property type="match status" value="4"/>
</dbReference>
<dbReference type="PRINTS" id="PR00451">
    <property type="entry name" value="CHITINBINDNG"/>
</dbReference>
<dbReference type="SMART" id="SM00270">
    <property type="entry name" value="ChtBD1"/>
    <property type="match status" value="4"/>
</dbReference>
<dbReference type="SUPFAM" id="SSF57016">
    <property type="entry name" value="Plant lectins/antimicrobial peptides"/>
    <property type="match status" value="4"/>
</dbReference>
<dbReference type="PROSITE" id="PS00026">
    <property type="entry name" value="CHIT_BIND_I_1"/>
    <property type="match status" value="4"/>
</dbReference>
<dbReference type="PROSITE" id="PS50941">
    <property type="entry name" value="CHIT_BIND_I_2"/>
    <property type="match status" value="4"/>
</dbReference>
<proteinExistence type="evidence at protein level"/>
<accession>Q0JF21</accession>
<accession>B7EUA6</accession>
<accession>P11219</accession>
<accession>Q7FZU3</accession>
<accession>Q7XRY8</accession>
<accession>Q9SBW5</accession>
<accession>Q9XFF3</accession>
<accession>Q9XFF4</accession>
<evidence type="ECO:0000250" key="1"/>
<evidence type="ECO:0000255" key="2"/>
<evidence type="ECO:0000255" key="3">
    <source>
        <dbReference type="PROSITE-ProRule" id="PRU00261"/>
    </source>
</evidence>
<evidence type="ECO:0000269" key="4">
    <source>
    </source>
</evidence>
<evidence type="ECO:0000305" key="5"/>
<protein>
    <recommendedName>
        <fullName>Lectin</fullName>
    </recommendedName>
    <alternativeName>
        <fullName>Agglutinin</fullName>
    </alternativeName>
    <component>
        <recommendedName>
            <fullName>Lectin 10 kDa peptide</fullName>
        </recommendedName>
    </component>
    <component>
        <recommendedName>
            <fullName>Lectin 8 kDa peptide</fullName>
        </recommendedName>
    </component>
</protein>
<keyword id="KW-0147">Chitin-binding</keyword>
<keyword id="KW-0903">Direct protein sequencing</keyword>
<keyword id="KW-1015">Disulfide bond</keyword>
<keyword id="KW-0325">Glycoprotein</keyword>
<keyword id="KW-0430">Lectin</keyword>
<keyword id="KW-0873">Pyrrolidone carboxylic acid</keyword>
<keyword id="KW-1185">Reference proteome</keyword>
<keyword id="KW-0677">Repeat</keyword>
<keyword id="KW-0732">Signal</keyword>
<organism>
    <name type="scientific">Oryza sativa subsp. japonica</name>
    <name type="common">Rice</name>
    <dbReference type="NCBI Taxonomy" id="39947"/>
    <lineage>
        <taxon>Eukaryota</taxon>
        <taxon>Viridiplantae</taxon>
        <taxon>Streptophyta</taxon>
        <taxon>Embryophyta</taxon>
        <taxon>Tracheophyta</taxon>
        <taxon>Spermatophyta</taxon>
        <taxon>Magnoliopsida</taxon>
        <taxon>Liliopsida</taxon>
        <taxon>Poales</taxon>
        <taxon>Poaceae</taxon>
        <taxon>BOP clade</taxon>
        <taxon>Oryzoideae</taxon>
        <taxon>Oryzeae</taxon>
        <taxon>Oryzinae</taxon>
        <taxon>Oryza</taxon>
        <taxon>Oryza sativa</taxon>
    </lineage>
</organism>
<feature type="signal peptide">
    <location>
        <begin position="1"/>
        <end position="28"/>
    </location>
</feature>
<feature type="chain" id="PRO_0000005262" description="Lectin">
    <location>
        <begin position="29"/>
        <end position="201"/>
    </location>
</feature>
<feature type="chain" id="PRO_0000005263" description="Lectin 10 kDa peptide">
    <location>
        <begin position="29"/>
        <end position="122"/>
    </location>
</feature>
<feature type="chain" id="PRO_0000005264" description="Lectin 8 kDa peptide">
    <location>
        <begin position="123"/>
        <end position="201"/>
    </location>
</feature>
<feature type="propeptide" id="PRO_0000005265">
    <location>
        <begin position="202"/>
        <end position="227"/>
    </location>
</feature>
<feature type="domain" description="Chitin-binding type-1 1" evidence="3">
    <location>
        <begin position="29"/>
        <end position="70"/>
    </location>
</feature>
<feature type="domain" description="Chitin-binding type-1 2" evidence="3">
    <location>
        <begin position="71"/>
        <end position="113"/>
    </location>
</feature>
<feature type="domain" description="Chitin-binding type-1 3" evidence="3">
    <location>
        <begin position="114"/>
        <end position="156"/>
    </location>
</feature>
<feature type="domain" description="Chitin-binding type-1 4" evidence="3">
    <location>
        <begin position="157"/>
        <end position="199"/>
    </location>
</feature>
<feature type="binding site" evidence="1">
    <location>
        <begin position="38"/>
        <end position="40"/>
    </location>
    <ligand>
        <name>substrate</name>
    </ligand>
</feature>
<feature type="binding site" evidence="1">
    <location>
        <begin position="90"/>
        <end position="101"/>
    </location>
    <ligand>
        <name>substrate</name>
    </ligand>
</feature>
<feature type="binding site" evidence="1">
    <location>
        <begin position="142"/>
        <end position="143"/>
    </location>
    <ligand>
        <name>substrate</name>
    </ligand>
</feature>
<feature type="modified residue" description="Pyrrolidone carboxylic acid" evidence="4">
    <location>
        <position position="29"/>
    </location>
</feature>
<feature type="glycosylation site" description="N-linked (GlcNAc...) asparagine" evidence="2">
    <location>
        <position position="211"/>
    </location>
</feature>
<feature type="disulfide bond" evidence="3">
    <location>
        <begin position="31"/>
        <end position="46"/>
    </location>
</feature>
<feature type="disulfide bond" evidence="3">
    <location>
        <begin position="40"/>
        <end position="52"/>
    </location>
</feature>
<feature type="disulfide bond" evidence="3">
    <location>
        <begin position="45"/>
        <end position="59"/>
    </location>
</feature>
<feature type="disulfide bond" evidence="3">
    <location>
        <begin position="63"/>
        <end position="68"/>
    </location>
</feature>
<feature type="disulfide bond" evidence="3">
    <location>
        <begin position="74"/>
        <end position="89"/>
    </location>
</feature>
<feature type="disulfide bond" evidence="3">
    <location>
        <begin position="83"/>
        <end position="95"/>
    </location>
</feature>
<feature type="disulfide bond" evidence="3">
    <location>
        <begin position="88"/>
        <end position="102"/>
    </location>
</feature>
<feature type="disulfide bond" evidence="3">
    <location>
        <begin position="106"/>
        <end position="111"/>
    </location>
</feature>
<feature type="disulfide bond" evidence="3">
    <location>
        <begin position="117"/>
        <end position="132"/>
    </location>
</feature>
<feature type="disulfide bond" evidence="3">
    <location>
        <begin position="126"/>
        <end position="138"/>
    </location>
</feature>
<feature type="disulfide bond" evidence="3">
    <location>
        <begin position="131"/>
        <end position="145"/>
    </location>
</feature>
<feature type="disulfide bond" evidence="3">
    <location>
        <begin position="149"/>
        <end position="154"/>
    </location>
</feature>
<feature type="disulfide bond" evidence="3">
    <location>
        <begin position="160"/>
        <end position="175"/>
    </location>
</feature>
<feature type="disulfide bond" evidence="3">
    <location>
        <begin position="169"/>
        <end position="181"/>
    </location>
</feature>
<feature type="disulfide bond" evidence="3">
    <location>
        <begin position="174"/>
        <end position="188"/>
    </location>
</feature>
<feature type="disulfide bond" evidence="3">
    <location>
        <begin position="192"/>
        <end position="197"/>
    </location>
</feature>
<feature type="sequence conflict" description="In Ref. 7; AAD27887." evidence="5" ref="7">
    <original>R</original>
    <variation>S</variation>
    <location>
        <position position="119"/>
    </location>
</feature>
<sequence length="227" mass="22796">MTMTSTTTKAMAMAAAVLAAAAVAATNAQTCGKQNDGMICPHNLCCSQFGYCGLGRDYCGTGCQSGACCSSQRCGSQGGGATCSNNQCCSQYGYCGFGSEYCGSGCQNGPCRADIKCGRNANGELCPNNMCCSQWGYCGLGSEFCGNGCQSGACCPEKRCGKQAGGDKCPNNFCCSAGGYCGLGGNYCGSGCQSGGCYKGGDGMAAILANNQSVSFEGIIESVAELV</sequence>
<gene>
    <name type="ordered locus">Os04g0173800</name>
    <name type="ordered locus">LOC_Os04g09390</name>
    <name type="ORF">OSJNBb0015C06.8</name>
</gene>
<comment type="function">
    <text>N-acetyl-D-glucosamine binding lectin.</text>
</comment>
<comment type="tissue specificity">
    <text evidence="4">Confined to root caps, several cell layers at the periphery of the coleorhiza and radicle, and in all cell layers of the coleoptile.</text>
</comment>
<comment type="sequence caution" evidence="5">
    <conflict type="erroneous initiation">
        <sequence resource="EMBL-CDS" id="CAE02230"/>
    </conflict>
</comment>
<name>AGI_ORYSJ</name>
<reference key="1">
    <citation type="journal article" date="1989" name="Plant Cell">
        <title>Expression of rice lectin is governed by two temporally and spatially regulated mRNAs in developing embryos.</title>
        <authorList>
            <person name="Wilkins T.A."/>
            <person name="Raikhel N.V."/>
        </authorList>
    </citation>
    <scope>NUCLEOTIDE SEQUENCE [MRNA]</scope>
    <scope>PARTIAL PROTEIN SEQUENCE</scope>
    <scope>PYROGLUTAMATE FORMATION AT GLN-29</scope>
    <scope>TISSUE SPECIFICITY</scope>
    <source>
        <strain>cv. Lemont</strain>
    </source>
</reference>
<reference key="2">
    <citation type="journal article" date="2002" name="Nature">
        <title>Sequence and analysis of rice chromosome 4.</title>
        <authorList>
            <person name="Feng Q."/>
            <person name="Zhang Y."/>
            <person name="Hao P."/>
            <person name="Wang S."/>
            <person name="Fu G."/>
            <person name="Huang Y."/>
            <person name="Li Y."/>
            <person name="Zhu J."/>
            <person name="Liu Y."/>
            <person name="Hu X."/>
            <person name="Jia P."/>
            <person name="Zhang Y."/>
            <person name="Zhao Q."/>
            <person name="Ying K."/>
            <person name="Yu S."/>
            <person name="Tang Y."/>
            <person name="Weng Q."/>
            <person name="Zhang L."/>
            <person name="Lu Y."/>
            <person name="Mu J."/>
            <person name="Lu Y."/>
            <person name="Zhang L.S."/>
            <person name="Yu Z."/>
            <person name="Fan D."/>
            <person name="Liu X."/>
            <person name="Lu T."/>
            <person name="Li C."/>
            <person name="Wu Y."/>
            <person name="Sun T."/>
            <person name="Lei H."/>
            <person name="Li T."/>
            <person name="Hu H."/>
            <person name="Guan J."/>
            <person name="Wu M."/>
            <person name="Zhang R."/>
            <person name="Zhou B."/>
            <person name="Chen Z."/>
            <person name="Chen L."/>
            <person name="Jin Z."/>
            <person name="Wang R."/>
            <person name="Yin H."/>
            <person name="Cai Z."/>
            <person name="Ren S."/>
            <person name="Lv G."/>
            <person name="Gu W."/>
            <person name="Zhu G."/>
            <person name="Tu Y."/>
            <person name="Jia J."/>
            <person name="Zhang Y."/>
            <person name="Chen J."/>
            <person name="Kang H."/>
            <person name="Chen X."/>
            <person name="Shao C."/>
            <person name="Sun Y."/>
            <person name="Hu Q."/>
            <person name="Zhang X."/>
            <person name="Zhang W."/>
            <person name="Wang L."/>
            <person name="Ding C."/>
            <person name="Sheng H."/>
            <person name="Gu J."/>
            <person name="Chen S."/>
            <person name="Ni L."/>
            <person name="Zhu F."/>
            <person name="Chen W."/>
            <person name="Lan L."/>
            <person name="Lai Y."/>
            <person name="Cheng Z."/>
            <person name="Gu M."/>
            <person name="Jiang J."/>
            <person name="Li J."/>
            <person name="Hong G."/>
            <person name="Xue Y."/>
            <person name="Han B."/>
        </authorList>
    </citation>
    <scope>NUCLEOTIDE SEQUENCE [LARGE SCALE GENOMIC DNA]</scope>
    <source>
        <strain>cv. Nipponbare</strain>
    </source>
</reference>
<reference key="3">
    <citation type="journal article" date="2005" name="Nature">
        <title>The map-based sequence of the rice genome.</title>
        <authorList>
            <consortium name="International rice genome sequencing project (IRGSP)"/>
        </authorList>
    </citation>
    <scope>NUCLEOTIDE SEQUENCE [LARGE SCALE GENOMIC DNA]</scope>
    <source>
        <strain>cv. Nipponbare</strain>
    </source>
</reference>
<reference key="4">
    <citation type="journal article" date="2008" name="Nucleic Acids Res.">
        <title>The rice annotation project database (RAP-DB): 2008 update.</title>
        <authorList>
            <consortium name="The rice annotation project (RAP)"/>
        </authorList>
    </citation>
    <scope>GENOME REANNOTATION</scope>
    <source>
        <strain>cv. Nipponbare</strain>
    </source>
</reference>
<reference key="5">
    <citation type="journal article" date="2013" name="Rice">
        <title>Improvement of the Oryza sativa Nipponbare reference genome using next generation sequence and optical map data.</title>
        <authorList>
            <person name="Kawahara Y."/>
            <person name="de la Bastide M."/>
            <person name="Hamilton J.P."/>
            <person name="Kanamori H."/>
            <person name="McCombie W.R."/>
            <person name="Ouyang S."/>
            <person name="Schwartz D.C."/>
            <person name="Tanaka T."/>
            <person name="Wu J."/>
            <person name="Zhou S."/>
            <person name="Childs K.L."/>
            <person name="Davidson R.M."/>
            <person name="Lin H."/>
            <person name="Quesada-Ocampo L."/>
            <person name="Vaillancourt B."/>
            <person name="Sakai H."/>
            <person name="Lee S.S."/>
            <person name="Kim J."/>
            <person name="Numa H."/>
            <person name="Itoh T."/>
            <person name="Buell C.R."/>
            <person name="Matsumoto T."/>
        </authorList>
    </citation>
    <scope>GENOME REANNOTATION</scope>
    <source>
        <strain>cv. Nipponbare</strain>
    </source>
</reference>
<reference key="6">
    <citation type="journal article" date="2003" name="Science">
        <title>Collection, mapping, and annotation of over 28,000 cDNA clones from japonica rice.</title>
        <authorList>
            <consortium name="The rice full-length cDNA consortium"/>
        </authorList>
    </citation>
    <scope>NUCLEOTIDE SEQUENCE [LARGE SCALE MRNA]</scope>
    <source>
        <strain>cv. Nipponbare</strain>
    </source>
</reference>
<reference key="7">
    <citation type="submission" date="1999-04" db="EMBL/GenBank/DDBJ databases">
        <title>Molecular evolution of lectin gene in the genus Oryza.</title>
        <authorList>
            <person name="Hao Z."/>
            <person name="Liu Q."/>
            <person name="Shen D."/>
        </authorList>
    </citation>
    <scope>NUCLEOTIDE SEQUENCE [GENOMIC DNA] OF 28-227</scope>
</reference>
<reference key="8">
    <citation type="journal article" date="1986" name="FEBS Lett.">
        <title>Extensive homologies between lectins from non-leguminous plants.</title>
        <authorList>
            <person name="Chapot M.-P."/>
            <person name="Peumans W.J."/>
            <person name="Strosberg A.D."/>
        </authorList>
    </citation>
    <scope>PRELIMINARY PROTEIN SEQUENCE OF 123-157</scope>
</reference>